<dbReference type="EC" id="2.1.1.182" evidence="1"/>
<dbReference type="EMBL" id="CP000950">
    <property type="protein sequence ID" value="ACA69840.1"/>
    <property type="molecule type" value="Genomic_DNA"/>
</dbReference>
<dbReference type="RefSeq" id="WP_011191710.1">
    <property type="nucleotide sequence ID" value="NZ_CP009792.1"/>
</dbReference>
<dbReference type="SMR" id="B1JKY3"/>
<dbReference type="GeneID" id="96664132"/>
<dbReference type="KEGG" id="ypy:YPK_3573"/>
<dbReference type="PATRIC" id="fig|502800.11.peg.4319"/>
<dbReference type="GO" id="GO:0005829">
    <property type="term" value="C:cytosol"/>
    <property type="evidence" value="ECO:0007669"/>
    <property type="project" value="TreeGrafter"/>
</dbReference>
<dbReference type="GO" id="GO:0052908">
    <property type="term" value="F:16S rRNA (adenine(1518)-N(6)/adenine(1519)-N(6))-dimethyltransferase activity"/>
    <property type="evidence" value="ECO:0007669"/>
    <property type="project" value="UniProtKB-EC"/>
</dbReference>
<dbReference type="GO" id="GO:0003723">
    <property type="term" value="F:RNA binding"/>
    <property type="evidence" value="ECO:0007669"/>
    <property type="project" value="UniProtKB-KW"/>
</dbReference>
<dbReference type="CDD" id="cd02440">
    <property type="entry name" value="AdoMet_MTases"/>
    <property type="match status" value="1"/>
</dbReference>
<dbReference type="FunFam" id="1.10.8.100:FF:000001">
    <property type="entry name" value="Ribosomal RNA small subunit methyltransferase A"/>
    <property type="match status" value="1"/>
</dbReference>
<dbReference type="FunFam" id="3.40.50.150:FF:000006">
    <property type="entry name" value="Ribosomal RNA small subunit methyltransferase A"/>
    <property type="match status" value="1"/>
</dbReference>
<dbReference type="Gene3D" id="1.10.8.100">
    <property type="entry name" value="Ribosomal RNA adenine dimethylase-like, domain 2"/>
    <property type="match status" value="1"/>
</dbReference>
<dbReference type="Gene3D" id="3.40.50.150">
    <property type="entry name" value="Vaccinia Virus protein VP39"/>
    <property type="match status" value="1"/>
</dbReference>
<dbReference type="HAMAP" id="MF_00607">
    <property type="entry name" value="16SrRNA_methyltr_A"/>
    <property type="match status" value="1"/>
</dbReference>
<dbReference type="InterPro" id="IPR001737">
    <property type="entry name" value="KsgA/Erm"/>
</dbReference>
<dbReference type="InterPro" id="IPR023165">
    <property type="entry name" value="rRNA_Ade_diMease-like_C"/>
</dbReference>
<dbReference type="InterPro" id="IPR020596">
    <property type="entry name" value="rRNA_Ade_Mease_Trfase_CS"/>
</dbReference>
<dbReference type="InterPro" id="IPR020598">
    <property type="entry name" value="rRNA_Ade_methylase_Trfase_N"/>
</dbReference>
<dbReference type="InterPro" id="IPR011530">
    <property type="entry name" value="rRNA_adenine_dimethylase"/>
</dbReference>
<dbReference type="InterPro" id="IPR029063">
    <property type="entry name" value="SAM-dependent_MTases_sf"/>
</dbReference>
<dbReference type="NCBIfam" id="TIGR00755">
    <property type="entry name" value="ksgA"/>
    <property type="match status" value="1"/>
</dbReference>
<dbReference type="PANTHER" id="PTHR11727">
    <property type="entry name" value="DIMETHYLADENOSINE TRANSFERASE"/>
    <property type="match status" value="1"/>
</dbReference>
<dbReference type="PANTHER" id="PTHR11727:SF7">
    <property type="entry name" value="DIMETHYLADENOSINE TRANSFERASE-RELATED"/>
    <property type="match status" value="1"/>
</dbReference>
<dbReference type="Pfam" id="PF00398">
    <property type="entry name" value="RrnaAD"/>
    <property type="match status" value="1"/>
</dbReference>
<dbReference type="SMART" id="SM00650">
    <property type="entry name" value="rADc"/>
    <property type="match status" value="1"/>
</dbReference>
<dbReference type="SUPFAM" id="SSF53335">
    <property type="entry name" value="S-adenosyl-L-methionine-dependent methyltransferases"/>
    <property type="match status" value="1"/>
</dbReference>
<dbReference type="PROSITE" id="PS01131">
    <property type="entry name" value="RRNA_A_DIMETH"/>
    <property type="match status" value="1"/>
</dbReference>
<dbReference type="PROSITE" id="PS51689">
    <property type="entry name" value="SAM_RNA_A_N6_MT"/>
    <property type="match status" value="1"/>
</dbReference>
<protein>
    <recommendedName>
        <fullName evidence="1">Ribosomal RNA small subunit methyltransferase A</fullName>
        <ecNumber evidence="1">2.1.1.182</ecNumber>
    </recommendedName>
    <alternativeName>
        <fullName evidence="1">16S rRNA (adenine(1518)-N(6)/adenine(1519)-N(6))-dimethyltransferase</fullName>
    </alternativeName>
    <alternativeName>
        <fullName evidence="1">16S rRNA dimethyladenosine transferase</fullName>
    </alternativeName>
    <alternativeName>
        <fullName evidence="1">16S rRNA dimethylase</fullName>
    </alternativeName>
    <alternativeName>
        <fullName evidence="1">S-adenosylmethionine-6-N', N'-adenosyl(rRNA) dimethyltransferase</fullName>
    </alternativeName>
</protein>
<comment type="function">
    <text evidence="1">Specifically dimethylates two adjacent adenosines (A1518 and A1519) in the loop of a conserved hairpin near the 3'-end of 16S rRNA in the 30S particle. May play a critical role in biogenesis of 30S subunits.</text>
</comment>
<comment type="catalytic activity">
    <reaction evidence="1">
        <text>adenosine(1518)/adenosine(1519) in 16S rRNA + 4 S-adenosyl-L-methionine = N(6)-dimethyladenosine(1518)/N(6)-dimethyladenosine(1519) in 16S rRNA + 4 S-adenosyl-L-homocysteine + 4 H(+)</text>
        <dbReference type="Rhea" id="RHEA:19609"/>
        <dbReference type="Rhea" id="RHEA-COMP:10232"/>
        <dbReference type="Rhea" id="RHEA-COMP:10233"/>
        <dbReference type="ChEBI" id="CHEBI:15378"/>
        <dbReference type="ChEBI" id="CHEBI:57856"/>
        <dbReference type="ChEBI" id="CHEBI:59789"/>
        <dbReference type="ChEBI" id="CHEBI:74411"/>
        <dbReference type="ChEBI" id="CHEBI:74493"/>
        <dbReference type="EC" id="2.1.1.182"/>
    </reaction>
</comment>
<comment type="subcellular location">
    <subcellularLocation>
        <location evidence="1">Cytoplasm</location>
    </subcellularLocation>
</comment>
<comment type="similarity">
    <text evidence="1">Belongs to the class I-like SAM-binding methyltransferase superfamily. rRNA adenine N(6)-methyltransferase family. RsmA subfamily.</text>
</comment>
<organism>
    <name type="scientific">Yersinia pseudotuberculosis serotype O:3 (strain YPIII)</name>
    <dbReference type="NCBI Taxonomy" id="502800"/>
    <lineage>
        <taxon>Bacteria</taxon>
        <taxon>Pseudomonadati</taxon>
        <taxon>Pseudomonadota</taxon>
        <taxon>Gammaproteobacteria</taxon>
        <taxon>Enterobacterales</taxon>
        <taxon>Yersiniaceae</taxon>
        <taxon>Yersinia</taxon>
    </lineage>
</organism>
<evidence type="ECO:0000255" key="1">
    <source>
        <dbReference type="HAMAP-Rule" id="MF_00607"/>
    </source>
</evidence>
<feature type="chain" id="PRO_1000130342" description="Ribosomal RNA small subunit methyltransferase A">
    <location>
        <begin position="1"/>
        <end position="272"/>
    </location>
</feature>
<feature type="binding site" evidence="1">
    <location>
        <position position="18"/>
    </location>
    <ligand>
        <name>S-adenosyl-L-methionine</name>
        <dbReference type="ChEBI" id="CHEBI:59789"/>
    </ligand>
</feature>
<feature type="binding site" evidence="1">
    <location>
        <position position="20"/>
    </location>
    <ligand>
        <name>S-adenosyl-L-methionine</name>
        <dbReference type="ChEBI" id="CHEBI:59789"/>
    </ligand>
</feature>
<feature type="binding site" evidence="1">
    <location>
        <position position="45"/>
    </location>
    <ligand>
        <name>S-adenosyl-L-methionine</name>
        <dbReference type="ChEBI" id="CHEBI:59789"/>
    </ligand>
</feature>
<feature type="binding site" evidence="1">
    <location>
        <position position="66"/>
    </location>
    <ligand>
        <name>S-adenosyl-L-methionine</name>
        <dbReference type="ChEBI" id="CHEBI:59789"/>
    </ligand>
</feature>
<feature type="binding site" evidence="1">
    <location>
        <position position="91"/>
    </location>
    <ligand>
        <name>S-adenosyl-L-methionine</name>
        <dbReference type="ChEBI" id="CHEBI:59789"/>
    </ligand>
</feature>
<feature type="binding site" evidence="1">
    <location>
        <position position="113"/>
    </location>
    <ligand>
        <name>S-adenosyl-L-methionine</name>
        <dbReference type="ChEBI" id="CHEBI:59789"/>
    </ligand>
</feature>
<sequence>MNNRVHQGHFARKRFGQNFLNDQFVIDSIVSAIHPVPGEAVVEIGPGLGALTEPVAARMDHMTVIELDRDLAARLASHPQLKDKLTIHQQDAMKVNFSELSEQAGQPLRVFGNLPYNISTPLMFHLFSYTDAIRDMHFMLQKEVVNRLVAGPNSKAYGRLTVMAQYYCNVIPVLEVPPTAFTPAPKVDSAVVRLIPHVQMPHPVGDVRMLSRITTQAFNQRRKTVRNSLGDLFTSEQLIELGIDPILRAENISVAQYCKLANWLSAQSTPQK</sequence>
<gene>
    <name evidence="1" type="primary">rsmA</name>
    <name evidence="1" type="synonym">ksgA</name>
    <name type="ordered locus">YPK_3573</name>
</gene>
<proteinExistence type="inferred from homology"/>
<reference key="1">
    <citation type="submission" date="2008-02" db="EMBL/GenBank/DDBJ databases">
        <title>Complete sequence of Yersinia pseudotuberculosis YPIII.</title>
        <authorList>
            <consortium name="US DOE Joint Genome Institute"/>
            <person name="Copeland A."/>
            <person name="Lucas S."/>
            <person name="Lapidus A."/>
            <person name="Glavina del Rio T."/>
            <person name="Dalin E."/>
            <person name="Tice H."/>
            <person name="Bruce D."/>
            <person name="Goodwin L."/>
            <person name="Pitluck S."/>
            <person name="Munk A.C."/>
            <person name="Brettin T."/>
            <person name="Detter J.C."/>
            <person name="Han C."/>
            <person name="Tapia R."/>
            <person name="Schmutz J."/>
            <person name="Larimer F."/>
            <person name="Land M."/>
            <person name="Hauser L."/>
            <person name="Challacombe J.F."/>
            <person name="Green L."/>
            <person name="Lindler L.E."/>
            <person name="Nikolich M.P."/>
            <person name="Richardson P."/>
        </authorList>
    </citation>
    <scope>NUCLEOTIDE SEQUENCE [LARGE SCALE GENOMIC DNA]</scope>
    <source>
        <strain>YPIII</strain>
    </source>
</reference>
<accession>B1JKY3</accession>
<name>RSMA_YERPY</name>
<keyword id="KW-0963">Cytoplasm</keyword>
<keyword id="KW-0489">Methyltransferase</keyword>
<keyword id="KW-0694">RNA-binding</keyword>
<keyword id="KW-0698">rRNA processing</keyword>
<keyword id="KW-0949">S-adenosyl-L-methionine</keyword>
<keyword id="KW-0808">Transferase</keyword>